<reference key="1">
    <citation type="submission" date="2006-01" db="EMBL/GenBank/DDBJ databases">
        <title>Complete sequence of Novosphingobium aromaticivorans DSM 12444.</title>
        <authorList>
            <consortium name="US DOE Joint Genome Institute"/>
            <person name="Copeland A."/>
            <person name="Lucas S."/>
            <person name="Lapidus A."/>
            <person name="Barry K."/>
            <person name="Detter J.C."/>
            <person name="Glavina T."/>
            <person name="Hammon N."/>
            <person name="Israni S."/>
            <person name="Pitluck S."/>
            <person name="Chain P."/>
            <person name="Malfatti S."/>
            <person name="Shin M."/>
            <person name="Vergez L."/>
            <person name="Schmutz J."/>
            <person name="Larimer F."/>
            <person name="Land M."/>
            <person name="Kyrpides N."/>
            <person name="Ivanova N."/>
            <person name="Fredrickson J."/>
            <person name="Balkwill D."/>
            <person name="Romine M.F."/>
            <person name="Richardson P."/>
        </authorList>
    </citation>
    <scope>NUCLEOTIDE SEQUENCE [LARGE SCALE GENOMIC DNA]</scope>
    <source>
        <strain>ATCC 700278 / DSM 12444 / CCUG 56034 / CIP 105152 / NBRC 16084 / F199</strain>
    </source>
</reference>
<name>TATB_NOVAD</name>
<accession>Q2G9D3</accession>
<proteinExistence type="inferred from homology"/>
<protein>
    <recommendedName>
        <fullName evidence="1">Sec-independent protein translocase protein TatB</fullName>
    </recommendedName>
</protein>
<feature type="chain" id="PRO_0000301203" description="Sec-independent protein translocase protein TatB">
    <location>
        <begin position="1"/>
        <end position="142"/>
    </location>
</feature>
<feature type="transmembrane region" description="Helical" evidence="1">
    <location>
        <begin position="1"/>
        <end position="21"/>
    </location>
</feature>
<feature type="region of interest" description="Disordered" evidence="2">
    <location>
        <begin position="75"/>
        <end position="142"/>
    </location>
</feature>
<feature type="compositionally biased region" description="Low complexity" evidence="2">
    <location>
        <begin position="76"/>
        <end position="94"/>
    </location>
</feature>
<feature type="compositionally biased region" description="Basic and acidic residues" evidence="2">
    <location>
        <begin position="123"/>
        <end position="133"/>
    </location>
</feature>
<gene>
    <name evidence="1" type="primary">tatB</name>
    <name type="ordered locus">Saro_1095</name>
</gene>
<keyword id="KW-0997">Cell inner membrane</keyword>
<keyword id="KW-1003">Cell membrane</keyword>
<keyword id="KW-0472">Membrane</keyword>
<keyword id="KW-0653">Protein transport</keyword>
<keyword id="KW-1185">Reference proteome</keyword>
<keyword id="KW-0811">Translocation</keyword>
<keyword id="KW-0812">Transmembrane</keyword>
<keyword id="KW-1133">Transmembrane helix</keyword>
<keyword id="KW-0813">Transport</keyword>
<comment type="function">
    <text evidence="1">Part of the twin-arginine translocation (Tat) system that transports large folded proteins containing a characteristic twin-arginine motif in their signal peptide across membranes. Together with TatC, TatB is part of a receptor directly interacting with Tat signal peptides. TatB may form an oligomeric binding site that transiently accommodates folded Tat precursor proteins before their translocation.</text>
</comment>
<comment type="subunit">
    <text evidence="1">The Tat system comprises two distinct complexes: a TatABC complex, containing multiple copies of TatA, TatB and TatC subunits, and a separate TatA complex, containing only TatA subunits. Substrates initially bind to the TatABC complex, which probably triggers association of the separate TatA complex to form the active translocon.</text>
</comment>
<comment type="subcellular location">
    <subcellularLocation>
        <location evidence="1">Cell inner membrane</location>
        <topology evidence="1">Single-pass membrane protein</topology>
    </subcellularLocation>
</comment>
<comment type="similarity">
    <text evidence="1">Belongs to the TatB family.</text>
</comment>
<organism>
    <name type="scientific">Novosphingobium aromaticivorans (strain ATCC 700278 / DSM 12444 / CCUG 56034 / CIP 105152 / NBRC 16084 / F199)</name>
    <dbReference type="NCBI Taxonomy" id="279238"/>
    <lineage>
        <taxon>Bacteria</taxon>
        <taxon>Pseudomonadati</taxon>
        <taxon>Pseudomonadota</taxon>
        <taxon>Alphaproteobacteria</taxon>
        <taxon>Sphingomonadales</taxon>
        <taxon>Sphingomonadaceae</taxon>
        <taxon>Novosphingobium</taxon>
    </lineage>
</organism>
<dbReference type="EMBL" id="CP000248">
    <property type="protein sequence ID" value="ABD25540.1"/>
    <property type="molecule type" value="Genomic_DNA"/>
</dbReference>
<dbReference type="RefSeq" id="WP_011444754.1">
    <property type="nucleotide sequence ID" value="NC_007794.1"/>
</dbReference>
<dbReference type="SMR" id="Q2G9D3"/>
<dbReference type="STRING" id="279238.Saro_1095"/>
<dbReference type="KEGG" id="nar:Saro_1095"/>
<dbReference type="eggNOG" id="COG1826">
    <property type="taxonomic scope" value="Bacteria"/>
</dbReference>
<dbReference type="HOGENOM" id="CLU_086034_1_3_5"/>
<dbReference type="Proteomes" id="UP000009134">
    <property type="component" value="Chromosome"/>
</dbReference>
<dbReference type="GO" id="GO:0033281">
    <property type="term" value="C:TAT protein transport complex"/>
    <property type="evidence" value="ECO:0007669"/>
    <property type="project" value="UniProtKB-UniRule"/>
</dbReference>
<dbReference type="GO" id="GO:0008320">
    <property type="term" value="F:protein transmembrane transporter activity"/>
    <property type="evidence" value="ECO:0007669"/>
    <property type="project" value="UniProtKB-UniRule"/>
</dbReference>
<dbReference type="GO" id="GO:0043953">
    <property type="term" value="P:protein transport by the Tat complex"/>
    <property type="evidence" value="ECO:0007669"/>
    <property type="project" value="UniProtKB-UniRule"/>
</dbReference>
<dbReference type="Gene3D" id="1.20.5.3310">
    <property type="match status" value="1"/>
</dbReference>
<dbReference type="HAMAP" id="MF_00237">
    <property type="entry name" value="TatB"/>
    <property type="match status" value="1"/>
</dbReference>
<dbReference type="InterPro" id="IPR018448">
    <property type="entry name" value="TatB"/>
</dbReference>
<dbReference type="NCBIfam" id="TIGR01410">
    <property type="entry name" value="tatB"/>
    <property type="match status" value="1"/>
</dbReference>
<dbReference type="PANTHER" id="PTHR33162">
    <property type="entry name" value="SEC-INDEPENDENT PROTEIN TRANSLOCASE PROTEIN TATA, CHLOROPLASTIC"/>
    <property type="match status" value="1"/>
</dbReference>
<dbReference type="PANTHER" id="PTHR33162:SF1">
    <property type="entry name" value="SEC-INDEPENDENT PROTEIN TRANSLOCASE PROTEIN TATA, CHLOROPLASTIC"/>
    <property type="match status" value="1"/>
</dbReference>
<dbReference type="PRINTS" id="PR01506">
    <property type="entry name" value="TATBPROTEIN"/>
</dbReference>
<evidence type="ECO:0000255" key="1">
    <source>
        <dbReference type="HAMAP-Rule" id="MF_00237"/>
    </source>
</evidence>
<evidence type="ECO:0000256" key="2">
    <source>
        <dbReference type="SAM" id="MobiDB-lite"/>
    </source>
</evidence>
<sequence length="142" mass="15550">MFDIGASELLVLVIVAIVVIGPKDLPLALRTAGRWVAKMRRVSNHFRAGIETMIREAEMEEMERKWKEQNERIMRETAAQETAAAQGQTPAAAEDQNDPFPTPLAADAPHTDPVMTGPMPPEAKVEARVEEAPAARPGSQQP</sequence>